<proteinExistence type="inferred from homology"/>
<organism>
    <name type="scientific">Lacticaseibacillus paracasei (strain ATCC 334 / BCRC 17002 / CCUG 31169 / CIP 107868 / KCTC 3260 / NRRL B-441)</name>
    <name type="common">Lactobacillus paracasei</name>
    <dbReference type="NCBI Taxonomy" id="321967"/>
    <lineage>
        <taxon>Bacteria</taxon>
        <taxon>Bacillati</taxon>
        <taxon>Bacillota</taxon>
        <taxon>Bacilli</taxon>
        <taxon>Lactobacillales</taxon>
        <taxon>Lactobacillaceae</taxon>
        <taxon>Lacticaseibacillus</taxon>
    </lineage>
</organism>
<name>RL7_LACP3</name>
<dbReference type="EMBL" id="CP000423">
    <property type="protein sequence ID" value="ABJ71016.1"/>
    <property type="molecule type" value="Genomic_DNA"/>
</dbReference>
<dbReference type="RefSeq" id="WP_003567138.1">
    <property type="nucleotide sequence ID" value="NC_008526.1"/>
</dbReference>
<dbReference type="RefSeq" id="YP_807458.1">
    <property type="nucleotide sequence ID" value="NC_008526.1"/>
</dbReference>
<dbReference type="SMR" id="Q035V6"/>
<dbReference type="STRING" id="321967.LSEI_2272"/>
<dbReference type="PaxDb" id="321967-LSEI_2272"/>
<dbReference type="GeneID" id="57090883"/>
<dbReference type="KEGG" id="lca:LSEI_2272"/>
<dbReference type="PATRIC" id="fig|321967.11.peg.2235"/>
<dbReference type="HOGENOM" id="CLU_086499_3_2_9"/>
<dbReference type="Proteomes" id="UP000001651">
    <property type="component" value="Chromosome"/>
</dbReference>
<dbReference type="GO" id="GO:0022625">
    <property type="term" value="C:cytosolic large ribosomal subunit"/>
    <property type="evidence" value="ECO:0007669"/>
    <property type="project" value="TreeGrafter"/>
</dbReference>
<dbReference type="GO" id="GO:0003729">
    <property type="term" value="F:mRNA binding"/>
    <property type="evidence" value="ECO:0007669"/>
    <property type="project" value="TreeGrafter"/>
</dbReference>
<dbReference type="GO" id="GO:0003735">
    <property type="term" value="F:structural constituent of ribosome"/>
    <property type="evidence" value="ECO:0007669"/>
    <property type="project" value="InterPro"/>
</dbReference>
<dbReference type="GO" id="GO:0006412">
    <property type="term" value="P:translation"/>
    <property type="evidence" value="ECO:0007669"/>
    <property type="project" value="UniProtKB-UniRule"/>
</dbReference>
<dbReference type="CDD" id="cd00387">
    <property type="entry name" value="Ribosomal_L7_L12"/>
    <property type="match status" value="1"/>
</dbReference>
<dbReference type="FunFam" id="3.30.1390.10:FF:000001">
    <property type="entry name" value="50S ribosomal protein L7/L12"/>
    <property type="match status" value="1"/>
</dbReference>
<dbReference type="Gene3D" id="3.30.1390.10">
    <property type="match status" value="1"/>
</dbReference>
<dbReference type="Gene3D" id="1.20.5.710">
    <property type="entry name" value="Single helix bin"/>
    <property type="match status" value="1"/>
</dbReference>
<dbReference type="HAMAP" id="MF_00368">
    <property type="entry name" value="Ribosomal_bL12"/>
    <property type="match status" value="1"/>
</dbReference>
<dbReference type="InterPro" id="IPR000206">
    <property type="entry name" value="Ribosomal_bL12"/>
</dbReference>
<dbReference type="InterPro" id="IPR013823">
    <property type="entry name" value="Ribosomal_bL12_C"/>
</dbReference>
<dbReference type="InterPro" id="IPR014719">
    <property type="entry name" value="Ribosomal_bL12_C/ClpS-like"/>
</dbReference>
<dbReference type="InterPro" id="IPR008932">
    <property type="entry name" value="Ribosomal_bL12_oligo"/>
</dbReference>
<dbReference type="InterPro" id="IPR036235">
    <property type="entry name" value="Ribosomal_bL12_oligo_N_sf"/>
</dbReference>
<dbReference type="NCBIfam" id="TIGR00855">
    <property type="entry name" value="L12"/>
    <property type="match status" value="1"/>
</dbReference>
<dbReference type="PANTHER" id="PTHR45987">
    <property type="entry name" value="39S RIBOSOMAL PROTEIN L12"/>
    <property type="match status" value="1"/>
</dbReference>
<dbReference type="PANTHER" id="PTHR45987:SF4">
    <property type="entry name" value="LARGE RIBOSOMAL SUBUNIT PROTEIN BL12M"/>
    <property type="match status" value="1"/>
</dbReference>
<dbReference type="Pfam" id="PF00542">
    <property type="entry name" value="Ribosomal_L12"/>
    <property type="match status" value="1"/>
</dbReference>
<dbReference type="Pfam" id="PF16320">
    <property type="entry name" value="Ribosomal_L12_N"/>
    <property type="match status" value="1"/>
</dbReference>
<dbReference type="SUPFAM" id="SSF54736">
    <property type="entry name" value="ClpS-like"/>
    <property type="match status" value="1"/>
</dbReference>
<dbReference type="SUPFAM" id="SSF48300">
    <property type="entry name" value="Ribosomal protein L7/12, oligomerisation (N-terminal) domain"/>
    <property type="match status" value="1"/>
</dbReference>
<evidence type="ECO:0000255" key="1">
    <source>
        <dbReference type="HAMAP-Rule" id="MF_00368"/>
    </source>
</evidence>
<evidence type="ECO:0000305" key="2"/>
<comment type="function">
    <text evidence="1">Forms part of the ribosomal stalk which helps the ribosome interact with GTP-bound translation factors. Is thus essential for accurate translation.</text>
</comment>
<comment type="subunit">
    <text evidence="1">Homodimer. Part of the ribosomal stalk of the 50S ribosomal subunit. Forms a multimeric L10(L12)X complex, where L10 forms an elongated spine to which 2 to 4 L12 dimers bind in a sequential fashion. Binds GTP-bound translation factors.</text>
</comment>
<comment type="similarity">
    <text evidence="1">Belongs to the bacterial ribosomal protein bL12 family.</text>
</comment>
<protein>
    <recommendedName>
        <fullName evidence="1">Large ribosomal subunit protein bL12</fullName>
    </recommendedName>
    <alternativeName>
        <fullName evidence="2">50S ribosomal protein L7/L12</fullName>
    </alternativeName>
</protein>
<gene>
    <name evidence="1" type="primary">rplL</name>
    <name type="ordered locus">LSEI_2272</name>
</gene>
<feature type="chain" id="PRO_1000007026" description="Large ribosomal subunit protein bL12">
    <location>
        <begin position="1"/>
        <end position="122"/>
    </location>
</feature>
<sequence>MALDVDGIIAQLKDASILELNDLVKSIEDEFGVKAAAPVAAGAAAGADAAAAKDTYDVELTEAGQEKVKVIKAVREITGLGLKDAKGMVDAAPKVIKEGLSEDDANKLKEQLEGVGATVTLK</sequence>
<accession>Q035V6</accession>
<keyword id="KW-1185">Reference proteome</keyword>
<keyword id="KW-0687">Ribonucleoprotein</keyword>
<keyword id="KW-0689">Ribosomal protein</keyword>
<reference key="1">
    <citation type="journal article" date="2006" name="Proc. Natl. Acad. Sci. U.S.A.">
        <title>Comparative genomics of the lactic acid bacteria.</title>
        <authorList>
            <person name="Makarova K.S."/>
            <person name="Slesarev A."/>
            <person name="Wolf Y.I."/>
            <person name="Sorokin A."/>
            <person name="Mirkin B."/>
            <person name="Koonin E.V."/>
            <person name="Pavlov A."/>
            <person name="Pavlova N."/>
            <person name="Karamychev V."/>
            <person name="Polouchine N."/>
            <person name="Shakhova V."/>
            <person name="Grigoriev I."/>
            <person name="Lou Y."/>
            <person name="Rohksar D."/>
            <person name="Lucas S."/>
            <person name="Huang K."/>
            <person name="Goodstein D.M."/>
            <person name="Hawkins T."/>
            <person name="Plengvidhya V."/>
            <person name="Welker D."/>
            <person name="Hughes J."/>
            <person name="Goh Y."/>
            <person name="Benson A."/>
            <person name="Baldwin K."/>
            <person name="Lee J.-H."/>
            <person name="Diaz-Muniz I."/>
            <person name="Dosti B."/>
            <person name="Smeianov V."/>
            <person name="Wechter W."/>
            <person name="Barabote R."/>
            <person name="Lorca G."/>
            <person name="Altermann E."/>
            <person name="Barrangou R."/>
            <person name="Ganesan B."/>
            <person name="Xie Y."/>
            <person name="Rawsthorne H."/>
            <person name="Tamir D."/>
            <person name="Parker C."/>
            <person name="Breidt F."/>
            <person name="Broadbent J.R."/>
            <person name="Hutkins R."/>
            <person name="O'Sullivan D."/>
            <person name="Steele J."/>
            <person name="Unlu G."/>
            <person name="Saier M.H. Jr."/>
            <person name="Klaenhammer T."/>
            <person name="Richardson P."/>
            <person name="Kozyavkin S."/>
            <person name="Weimer B.C."/>
            <person name="Mills D.A."/>
        </authorList>
    </citation>
    <scope>NUCLEOTIDE SEQUENCE [LARGE SCALE GENOMIC DNA]</scope>
    <source>
        <strain>ATCC 334 / BCRC 17002 / CCUG 31169 / CIP 107868 / KCTC 3260 / NRRL B-441</strain>
    </source>
</reference>